<evidence type="ECO:0000250" key="1"/>
<evidence type="ECO:0000255" key="2"/>
<evidence type="ECO:0000255" key="3">
    <source>
        <dbReference type="PROSITE-ProRule" id="PRU00159"/>
    </source>
</evidence>
<evidence type="ECO:0000255" key="4">
    <source>
        <dbReference type="PROSITE-ProRule" id="PRU10027"/>
    </source>
</evidence>
<evidence type="ECO:0000256" key="5">
    <source>
        <dbReference type="SAM" id="MobiDB-lite"/>
    </source>
</evidence>
<evidence type="ECO:0000269" key="6">
    <source>
    </source>
</evidence>
<evidence type="ECO:0000305" key="7"/>
<proteinExistence type="evidence at transcript level"/>
<dbReference type="EC" id="2.7.11.-"/>
<dbReference type="EMBL" id="AC010924">
    <property type="protein sequence ID" value="AAF18509.1"/>
    <property type="status" value="ALT_SEQ"/>
    <property type="molecule type" value="Genomic_DNA"/>
</dbReference>
<dbReference type="EMBL" id="CP002684">
    <property type="status" value="NOT_ANNOTATED_CDS"/>
    <property type="molecule type" value="Genomic_DNA"/>
</dbReference>
<dbReference type="PIR" id="B86296">
    <property type="entry name" value="B86296"/>
</dbReference>
<dbReference type="SMR" id="Q9S9M3"/>
<dbReference type="FunCoup" id="Q9S9M3">
    <property type="interactions" value="18"/>
</dbReference>
<dbReference type="GlyCosmos" id="Q9S9M3">
    <property type="glycosylation" value="9 sites, No reported glycans"/>
</dbReference>
<dbReference type="GlyGen" id="Q9S9M3">
    <property type="glycosylation" value="10 sites"/>
</dbReference>
<dbReference type="PeptideAtlas" id="Q9S9M3"/>
<dbReference type="Araport" id="AT1G16140"/>
<dbReference type="TAIR" id="AT1G16140"/>
<dbReference type="InParanoid" id="Q9S9M3"/>
<dbReference type="PRO" id="PR:Q9S9M3"/>
<dbReference type="Proteomes" id="UP000006548">
    <property type="component" value="Chromosome 1"/>
</dbReference>
<dbReference type="ExpressionAtlas" id="Q9S9M3">
    <property type="expression patterns" value="baseline and differential"/>
</dbReference>
<dbReference type="GO" id="GO:0005886">
    <property type="term" value="C:plasma membrane"/>
    <property type="evidence" value="ECO:0000318"/>
    <property type="project" value="GO_Central"/>
</dbReference>
<dbReference type="GO" id="GO:0005524">
    <property type="term" value="F:ATP binding"/>
    <property type="evidence" value="ECO:0007669"/>
    <property type="project" value="UniProtKB-KW"/>
</dbReference>
<dbReference type="GO" id="GO:0005509">
    <property type="term" value="F:calcium ion binding"/>
    <property type="evidence" value="ECO:0007669"/>
    <property type="project" value="InterPro"/>
</dbReference>
<dbReference type="GO" id="GO:0106310">
    <property type="term" value="F:protein serine kinase activity"/>
    <property type="evidence" value="ECO:0007669"/>
    <property type="project" value="RHEA"/>
</dbReference>
<dbReference type="GO" id="GO:0004674">
    <property type="term" value="F:protein serine/threonine kinase activity"/>
    <property type="evidence" value="ECO:0007669"/>
    <property type="project" value="UniProtKB-KW"/>
</dbReference>
<dbReference type="GO" id="GO:0007166">
    <property type="term" value="P:cell surface receptor signaling pathway"/>
    <property type="evidence" value="ECO:0000318"/>
    <property type="project" value="GO_Central"/>
</dbReference>
<dbReference type="GO" id="GO:0006952">
    <property type="term" value="P:defense response"/>
    <property type="evidence" value="ECO:0000318"/>
    <property type="project" value="GO_Central"/>
</dbReference>
<dbReference type="CDD" id="cd00054">
    <property type="entry name" value="EGF_CA"/>
    <property type="match status" value="1"/>
</dbReference>
<dbReference type="CDD" id="cd14066">
    <property type="entry name" value="STKc_IRAK"/>
    <property type="match status" value="1"/>
</dbReference>
<dbReference type="FunFam" id="1.10.510.10:FF:000084">
    <property type="entry name" value="Wall-associated receptor kinase 2"/>
    <property type="match status" value="1"/>
</dbReference>
<dbReference type="FunFam" id="3.30.200.20:FF:000043">
    <property type="entry name" value="Wall-associated receptor kinase 2"/>
    <property type="match status" value="1"/>
</dbReference>
<dbReference type="Gene3D" id="2.10.25.10">
    <property type="entry name" value="Laminin"/>
    <property type="match status" value="1"/>
</dbReference>
<dbReference type="Gene3D" id="3.30.200.20">
    <property type="entry name" value="Phosphorylase Kinase, domain 1"/>
    <property type="match status" value="1"/>
</dbReference>
<dbReference type="Gene3D" id="1.10.510.10">
    <property type="entry name" value="Transferase(Phosphotransferase) domain 1"/>
    <property type="match status" value="1"/>
</dbReference>
<dbReference type="InterPro" id="IPR018097">
    <property type="entry name" value="EGF_Ca-bd_CS"/>
</dbReference>
<dbReference type="InterPro" id="IPR011009">
    <property type="entry name" value="Kinase-like_dom_sf"/>
</dbReference>
<dbReference type="InterPro" id="IPR000719">
    <property type="entry name" value="Prot_kinase_dom"/>
</dbReference>
<dbReference type="InterPro" id="IPR008271">
    <property type="entry name" value="Ser/Thr_kinase_AS"/>
</dbReference>
<dbReference type="InterPro" id="IPR013695">
    <property type="entry name" value="WAK"/>
</dbReference>
<dbReference type="InterPro" id="IPR045274">
    <property type="entry name" value="WAK-like"/>
</dbReference>
<dbReference type="PANTHER" id="PTHR27005:SF471">
    <property type="entry name" value="WALL-ASSOCIATED RECEPTOR KINASE-LIKE 1-RELATED"/>
    <property type="match status" value="1"/>
</dbReference>
<dbReference type="PANTHER" id="PTHR27005">
    <property type="entry name" value="WALL-ASSOCIATED RECEPTOR KINASE-LIKE 21"/>
    <property type="match status" value="1"/>
</dbReference>
<dbReference type="Pfam" id="PF00069">
    <property type="entry name" value="Pkinase"/>
    <property type="match status" value="1"/>
</dbReference>
<dbReference type="Pfam" id="PF08488">
    <property type="entry name" value="WAK"/>
    <property type="match status" value="1"/>
</dbReference>
<dbReference type="SMART" id="SM00220">
    <property type="entry name" value="S_TKc"/>
    <property type="match status" value="1"/>
</dbReference>
<dbReference type="SUPFAM" id="SSF56112">
    <property type="entry name" value="Protein kinase-like (PK-like)"/>
    <property type="match status" value="1"/>
</dbReference>
<dbReference type="PROSITE" id="PS01186">
    <property type="entry name" value="EGF_2"/>
    <property type="match status" value="1"/>
</dbReference>
<dbReference type="PROSITE" id="PS01187">
    <property type="entry name" value="EGF_CA"/>
    <property type="match status" value="1"/>
</dbReference>
<dbReference type="PROSITE" id="PS50011">
    <property type="entry name" value="PROTEIN_KINASE_DOM"/>
    <property type="match status" value="1"/>
</dbReference>
<dbReference type="PROSITE" id="PS00108">
    <property type="entry name" value="PROTEIN_KINASE_ST"/>
    <property type="match status" value="1"/>
</dbReference>
<feature type="signal peptide" evidence="2">
    <location>
        <begin position="1"/>
        <end position="25"/>
    </location>
</feature>
<feature type="chain" id="PRO_0000253307" description="Wall-associated receptor kinase-like 3">
    <location>
        <begin position="26"/>
        <end position="730"/>
    </location>
</feature>
<feature type="topological domain" description="Extracellular" evidence="2">
    <location>
        <begin position="26"/>
        <end position="357"/>
    </location>
</feature>
<feature type="transmembrane region" description="Helical" evidence="2">
    <location>
        <begin position="358"/>
        <end position="378"/>
    </location>
</feature>
<feature type="topological domain" description="Cytoplasmic" evidence="2">
    <location>
        <begin position="379"/>
        <end position="730"/>
    </location>
</feature>
<feature type="domain" description="Protein kinase" evidence="3">
    <location>
        <begin position="428"/>
        <end position="699"/>
    </location>
</feature>
<feature type="region of interest" description="Atypical EGF-like">
    <location>
        <begin position="283"/>
        <end position="340"/>
    </location>
</feature>
<feature type="region of interest" description="Disordered" evidence="5">
    <location>
        <begin position="703"/>
        <end position="730"/>
    </location>
</feature>
<feature type="compositionally biased region" description="Acidic residues" evidence="5">
    <location>
        <begin position="712"/>
        <end position="721"/>
    </location>
</feature>
<feature type="active site" description="Proton acceptor" evidence="3 4">
    <location>
        <position position="553"/>
    </location>
</feature>
<feature type="binding site" evidence="3">
    <location>
        <begin position="434"/>
        <end position="442"/>
    </location>
    <ligand>
        <name>ATP</name>
        <dbReference type="ChEBI" id="CHEBI:30616"/>
    </ligand>
</feature>
<feature type="binding site" evidence="3">
    <location>
        <position position="456"/>
    </location>
    <ligand>
        <name>ATP</name>
        <dbReference type="ChEBI" id="CHEBI:30616"/>
    </ligand>
</feature>
<feature type="glycosylation site" description="N-linked (GlcNAc...) asparagine" evidence="2">
    <location>
        <position position="32"/>
    </location>
</feature>
<feature type="glycosylation site" description="N-linked (GlcNAc...) asparagine" evidence="2">
    <location>
        <position position="38"/>
    </location>
</feature>
<feature type="glycosylation site" description="N-linked (GlcNAc...) asparagine" evidence="2">
    <location>
        <position position="68"/>
    </location>
</feature>
<feature type="glycosylation site" description="N-linked (GlcNAc...) asparagine" evidence="2">
    <location>
        <position position="90"/>
    </location>
</feature>
<feature type="glycosylation site" description="N-linked (GlcNAc...) asparagine" evidence="2">
    <location>
        <position position="119"/>
    </location>
</feature>
<feature type="glycosylation site" description="N-linked (GlcNAc...) asparagine" evidence="2">
    <location>
        <position position="132"/>
    </location>
</feature>
<feature type="glycosylation site" description="N-linked (GlcNAc...) asparagine" evidence="2">
    <location>
        <position position="212"/>
    </location>
</feature>
<feature type="glycosylation site" description="N-linked (GlcNAc...) asparagine" evidence="2">
    <location>
        <position position="233"/>
    </location>
</feature>
<feature type="glycosylation site" description="N-linked (GlcNAc...) asparagine" evidence="2">
    <location>
        <position position="269"/>
    </location>
</feature>
<feature type="disulfide bond" evidence="1">
    <location>
        <begin position="285"/>
        <end position="298"/>
    </location>
</feature>
<feature type="disulfide bond" evidence="1">
    <location>
        <begin position="320"/>
        <end position="331"/>
    </location>
</feature>
<feature type="disulfide bond" evidence="1">
    <location>
        <begin position="326"/>
        <end position="340"/>
    </location>
</feature>
<comment type="function">
    <text>Serine/threonine-protein kinase that may function as a signaling receptor of extracellular matrix component.</text>
</comment>
<comment type="catalytic activity">
    <reaction>
        <text>L-seryl-[protein] + ATP = O-phospho-L-seryl-[protein] + ADP + H(+)</text>
        <dbReference type="Rhea" id="RHEA:17989"/>
        <dbReference type="Rhea" id="RHEA-COMP:9863"/>
        <dbReference type="Rhea" id="RHEA-COMP:11604"/>
        <dbReference type="ChEBI" id="CHEBI:15378"/>
        <dbReference type="ChEBI" id="CHEBI:29999"/>
        <dbReference type="ChEBI" id="CHEBI:30616"/>
        <dbReference type="ChEBI" id="CHEBI:83421"/>
        <dbReference type="ChEBI" id="CHEBI:456216"/>
    </reaction>
</comment>
<comment type="catalytic activity">
    <reaction>
        <text>L-threonyl-[protein] + ATP = O-phospho-L-threonyl-[protein] + ADP + H(+)</text>
        <dbReference type="Rhea" id="RHEA:46608"/>
        <dbReference type="Rhea" id="RHEA-COMP:11060"/>
        <dbReference type="Rhea" id="RHEA-COMP:11605"/>
        <dbReference type="ChEBI" id="CHEBI:15378"/>
        <dbReference type="ChEBI" id="CHEBI:30013"/>
        <dbReference type="ChEBI" id="CHEBI:30616"/>
        <dbReference type="ChEBI" id="CHEBI:61977"/>
        <dbReference type="ChEBI" id="CHEBI:456216"/>
    </reaction>
</comment>
<comment type="subcellular location">
    <subcellularLocation>
        <location evidence="7">Membrane</location>
        <topology evidence="7">Single-pass type I membrane protein</topology>
    </subcellularLocation>
</comment>
<comment type="tissue specificity">
    <text evidence="6">Preferentially expressed in roots and flowers.</text>
</comment>
<comment type="domain">
    <text>The EGF-like region is specific to this family of proteins and seems to consist of the C-terminal of an EGF-like domain fused to the N-terminal of another one.</text>
</comment>
<comment type="similarity">
    <text evidence="3">Belongs to the protein kinase superfamily. Ser/Thr protein kinase family.</text>
</comment>
<comment type="sequence caution" evidence="7">
    <conflict type="erroneous gene model prediction">
        <sequence resource="EMBL-CDS" id="AAF18509"/>
    </conflict>
</comment>
<gene>
    <name type="primary">WAKL3</name>
    <name type="ordered locus">At1g16140</name>
    <name type="ORF">T24D18.22</name>
</gene>
<name>WAKLC_ARATH</name>
<reference key="1">
    <citation type="journal article" date="2000" name="Nature">
        <title>Sequence and analysis of chromosome 1 of the plant Arabidopsis thaliana.</title>
        <authorList>
            <person name="Theologis A."/>
            <person name="Ecker J.R."/>
            <person name="Palm C.J."/>
            <person name="Federspiel N.A."/>
            <person name="Kaul S."/>
            <person name="White O."/>
            <person name="Alonso J."/>
            <person name="Altafi H."/>
            <person name="Araujo R."/>
            <person name="Bowman C.L."/>
            <person name="Brooks S.Y."/>
            <person name="Buehler E."/>
            <person name="Chan A."/>
            <person name="Chao Q."/>
            <person name="Chen H."/>
            <person name="Cheuk R.F."/>
            <person name="Chin C.W."/>
            <person name="Chung M.K."/>
            <person name="Conn L."/>
            <person name="Conway A.B."/>
            <person name="Conway A.R."/>
            <person name="Creasy T.H."/>
            <person name="Dewar K."/>
            <person name="Dunn P."/>
            <person name="Etgu P."/>
            <person name="Feldblyum T.V."/>
            <person name="Feng J.-D."/>
            <person name="Fong B."/>
            <person name="Fujii C.Y."/>
            <person name="Gill J.E."/>
            <person name="Goldsmith A.D."/>
            <person name="Haas B."/>
            <person name="Hansen N.F."/>
            <person name="Hughes B."/>
            <person name="Huizar L."/>
            <person name="Hunter J.L."/>
            <person name="Jenkins J."/>
            <person name="Johnson-Hopson C."/>
            <person name="Khan S."/>
            <person name="Khaykin E."/>
            <person name="Kim C.J."/>
            <person name="Koo H.L."/>
            <person name="Kremenetskaia I."/>
            <person name="Kurtz D.B."/>
            <person name="Kwan A."/>
            <person name="Lam B."/>
            <person name="Langin-Hooper S."/>
            <person name="Lee A."/>
            <person name="Lee J.M."/>
            <person name="Lenz C.A."/>
            <person name="Li J.H."/>
            <person name="Li Y.-P."/>
            <person name="Lin X."/>
            <person name="Liu S.X."/>
            <person name="Liu Z.A."/>
            <person name="Luros J.S."/>
            <person name="Maiti R."/>
            <person name="Marziali A."/>
            <person name="Militscher J."/>
            <person name="Miranda M."/>
            <person name="Nguyen M."/>
            <person name="Nierman W.C."/>
            <person name="Osborne B.I."/>
            <person name="Pai G."/>
            <person name="Peterson J."/>
            <person name="Pham P.K."/>
            <person name="Rizzo M."/>
            <person name="Rooney T."/>
            <person name="Rowley D."/>
            <person name="Sakano H."/>
            <person name="Salzberg S.L."/>
            <person name="Schwartz J.R."/>
            <person name="Shinn P."/>
            <person name="Southwick A.M."/>
            <person name="Sun H."/>
            <person name="Tallon L.J."/>
            <person name="Tambunga G."/>
            <person name="Toriumi M.J."/>
            <person name="Town C.D."/>
            <person name="Utterback T."/>
            <person name="Van Aken S."/>
            <person name="Vaysberg M."/>
            <person name="Vysotskaia V.S."/>
            <person name="Walker M."/>
            <person name="Wu D."/>
            <person name="Yu G."/>
            <person name="Fraser C.M."/>
            <person name="Venter J.C."/>
            <person name="Davis R.W."/>
        </authorList>
    </citation>
    <scope>NUCLEOTIDE SEQUENCE [LARGE SCALE GENOMIC DNA]</scope>
    <source>
        <strain>cv. Columbia</strain>
    </source>
</reference>
<reference key="2">
    <citation type="journal article" date="2017" name="Plant J.">
        <title>Araport11: a complete reannotation of the Arabidopsis thaliana reference genome.</title>
        <authorList>
            <person name="Cheng C.Y."/>
            <person name="Krishnakumar V."/>
            <person name="Chan A.P."/>
            <person name="Thibaud-Nissen F."/>
            <person name="Schobel S."/>
            <person name="Town C.D."/>
        </authorList>
    </citation>
    <scope>GENOME REANNOTATION</scope>
    <source>
        <strain>cv. Columbia</strain>
    </source>
</reference>
<reference key="3">
    <citation type="journal article" date="2002" name="Plant Physiol.">
        <title>The cell wall-associated kinase (WAK) and WAK-like kinase gene family.</title>
        <authorList>
            <person name="Verica J.A."/>
            <person name="He Z.-H."/>
        </authorList>
    </citation>
    <scope>GENE FAMILY ORGANIZATION</scope>
</reference>
<reference key="4">
    <citation type="journal article" date="2003" name="Plant Physiol.">
        <title>Tissue-specific and developmentally regulated expression of a cluster of tandemly arrayed cell wall-associated kinase-like kinase genes in Arabidopsis.</title>
        <authorList>
            <person name="Verica J.A."/>
            <person name="Chae L."/>
            <person name="Tong H.-Y."/>
            <person name="Ingmire P."/>
            <person name="He Z.-H."/>
        </authorList>
    </citation>
    <scope>TISSUE SPECIFICITY</scope>
</reference>
<accession>Q9S9M3</accession>
<protein>
    <recommendedName>
        <fullName>Wall-associated receptor kinase-like 3</fullName>
        <ecNumber>2.7.11.-</ecNumber>
    </recommendedName>
</protein>
<keyword id="KW-0067">ATP-binding</keyword>
<keyword id="KW-1015">Disulfide bond</keyword>
<keyword id="KW-0325">Glycoprotein</keyword>
<keyword id="KW-0418">Kinase</keyword>
<keyword id="KW-0472">Membrane</keyword>
<keyword id="KW-0547">Nucleotide-binding</keyword>
<keyword id="KW-1185">Reference proteome</keyword>
<keyword id="KW-0723">Serine/threonine-protein kinase</keyword>
<keyword id="KW-0732">Signal</keyword>
<keyword id="KW-0808">Transferase</keyword>
<keyword id="KW-0812">Transmembrane</keyword>
<keyword id="KW-1133">Transmembrane helix</keyword>
<organism>
    <name type="scientific">Arabidopsis thaliana</name>
    <name type="common">Mouse-ear cress</name>
    <dbReference type="NCBI Taxonomy" id="3702"/>
    <lineage>
        <taxon>Eukaryota</taxon>
        <taxon>Viridiplantae</taxon>
        <taxon>Streptophyta</taxon>
        <taxon>Embryophyta</taxon>
        <taxon>Tracheophyta</taxon>
        <taxon>Spermatophyta</taxon>
        <taxon>Magnoliopsida</taxon>
        <taxon>eudicotyledons</taxon>
        <taxon>Gunneridae</taxon>
        <taxon>Pentapetalae</taxon>
        <taxon>rosids</taxon>
        <taxon>malvids</taxon>
        <taxon>Brassicales</taxon>
        <taxon>Brassicaceae</taxon>
        <taxon>Camelineae</taxon>
        <taxon>Arabidopsis</taxon>
    </lineage>
</organism>
<sequence length="730" mass="81928">MKTKTYNFRYIVASVLTLLMNGSSAATPPNSNSSSSCNRTFGGISIPFPFGIGGKDCYLNSWYEVVCNSTTSGSCKTVPFLTRINREVVNISLPKSDFFSPYGVVHIKGPVTSLGCSSNISQGLQKTLPDLNITGRGSPYFLTDENRLVAVGCGTKALMTDIESEILGCESSCKDTKSNEVGNSLCNGYKCCQARLPVERPQAVGVNIESNNDTRGEGCKAAFLTSMKYFPSNITKPEWFQADGYAVVELGWYFDTSDSRFRNPLGCTNLTRSSGSYFLTDICLCRYGYFSRMSYRSCYCGSGYRGNPYIRGGCIDIDECEVPNKCGEDTCVNMAGRYSCVPKITKPAKLAHVLRGVLIGLLGLLFFVIGIFGLYKFIRKRRRIIRSMKFFKRNGGLLLKQQLTTKDGSVEMSKIFSSRELEKATDNFSIDRVLGQGGQGTVYKRMLVDGSIVAVKRSKVVDEDKMEEFINEIVLLSQINHRNIVKLLGCCLETEVPILVYEYIPNGDLFKRLHDEYDDYMMTWEVRLRIAVEIAGALSYMHSAASFPIFHRDIKTTNILLDEKYRAKISDFGTSRSVATDQTHLTTLVAGTFGYMDPEYFLSSQYTHKSDVYSFGVVLVELITGEKPMSRVRSEEGIGLATYFLEAMKENRAVDIIDIRIKDESKQVMAVAKLARRCLNRKGNKRPNMREVSIKLERIRSSPKDLDVHTENEEEEEEDQLMEINRIYDS</sequence>